<proteinExistence type="inferred from homology"/>
<name>ATPG_RUEST</name>
<reference key="1">
    <citation type="submission" date="2006-05" db="EMBL/GenBank/DDBJ databases">
        <title>Complete sequence of chromosome of Silicibacter sp. TM1040.</title>
        <authorList>
            <consortium name="US DOE Joint Genome Institute"/>
            <person name="Copeland A."/>
            <person name="Lucas S."/>
            <person name="Lapidus A."/>
            <person name="Barry K."/>
            <person name="Detter J.C."/>
            <person name="Glavina del Rio T."/>
            <person name="Hammon N."/>
            <person name="Israni S."/>
            <person name="Dalin E."/>
            <person name="Tice H."/>
            <person name="Pitluck S."/>
            <person name="Brettin T."/>
            <person name="Bruce D."/>
            <person name="Han C."/>
            <person name="Tapia R."/>
            <person name="Goodwin L."/>
            <person name="Thompson L.S."/>
            <person name="Gilna P."/>
            <person name="Schmutz J."/>
            <person name="Larimer F."/>
            <person name="Land M."/>
            <person name="Hauser L."/>
            <person name="Kyrpides N."/>
            <person name="Kim E."/>
            <person name="Belas R."/>
            <person name="Moran M.A."/>
            <person name="Buchan A."/>
            <person name="Gonzalez J.M."/>
            <person name="Schell M.A."/>
            <person name="Sun F."/>
            <person name="Richardson P."/>
        </authorList>
    </citation>
    <scope>NUCLEOTIDE SEQUENCE [LARGE SCALE GENOMIC DNA]</scope>
    <source>
        <strain>TM1040</strain>
    </source>
</reference>
<sequence length="291" mass="31218">MPSLKDLKNRISSVKNTRKITKAMQMVAAAKLRRAQEAAEDARPYAERFNAVMAGLAASVGQSDTAPKLLAGTGSDQVQLLVVMTAERGLCGGFNANIAKLARQKVLDLQAAGKTVKILTVGKKGRDVLKREFGDLFVGHVDLTEVKRVGYVDAQGIAKDILARFDAGEFDVATIFYSKFQNVVTQIPTAQQIIPAEFDAEGAEATSGVVDYEPSEEAILADLLPRGVATQIFAGLLENGASEQGARMSAMDNATRNAGEMIDKLTIEYNRSRQAVITNELIEIISGAEAL</sequence>
<accession>Q1GEU7</accession>
<evidence type="ECO:0000255" key="1">
    <source>
        <dbReference type="HAMAP-Rule" id="MF_00815"/>
    </source>
</evidence>
<keyword id="KW-0066">ATP synthesis</keyword>
<keyword id="KW-0997">Cell inner membrane</keyword>
<keyword id="KW-1003">Cell membrane</keyword>
<keyword id="KW-0139">CF(1)</keyword>
<keyword id="KW-0375">Hydrogen ion transport</keyword>
<keyword id="KW-0406">Ion transport</keyword>
<keyword id="KW-0472">Membrane</keyword>
<keyword id="KW-1185">Reference proteome</keyword>
<keyword id="KW-0813">Transport</keyword>
<comment type="function">
    <text evidence="1">Produces ATP from ADP in the presence of a proton gradient across the membrane. The gamma chain is believed to be important in regulating ATPase activity and the flow of protons through the CF(0) complex.</text>
</comment>
<comment type="subunit">
    <text evidence="1">F-type ATPases have 2 components, CF(1) - the catalytic core - and CF(0) - the membrane proton channel. CF(1) has five subunits: alpha(3), beta(3), gamma(1), delta(1), epsilon(1). CF(0) has three main subunits: a, b and c.</text>
</comment>
<comment type="subcellular location">
    <subcellularLocation>
        <location evidence="1">Cell inner membrane</location>
        <topology evidence="1">Peripheral membrane protein</topology>
    </subcellularLocation>
</comment>
<comment type="similarity">
    <text evidence="1">Belongs to the ATPase gamma chain family.</text>
</comment>
<protein>
    <recommendedName>
        <fullName evidence="1">ATP synthase gamma chain</fullName>
    </recommendedName>
    <alternativeName>
        <fullName evidence="1">ATP synthase F1 sector gamma subunit</fullName>
    </alternativeName>
    <alternativeName>
        <fullName evidence="1">F-ATPase gamma subunit</fullName>
    </alternativeName>
</protein>
<feature type="chain" id="PRO_1000053339" description="ATP synthase gamma chain">
    <location>
        <begin position="1"/>
        <end position="291"/>
    </location>
</feature>
<organism>
    <name type="scientific">Ruegeria sp. (strain TM1040)</name>
    <name type="common">Silicibacter sp.</name>
    <dbReference type="NCBI Taxonomy" id="292414"/>
    <lineage>
        <taxon>Bacteria</taxon>
        <taxon>Pseudomonadati</taxon>
        <taxon>Pseudomonadota</taxon>
        <taxon>Alphaproteobacteria</taxon>
        <taxon>Rhodobacterales</taxon>
        <taxon>Roseobacteraceae</taxon>
        <taxon>Ruegeria</taxon>
    </lineage>
</organism>
<gene>
    <name evidence="1" type="primary">atpG</name>
    <name type="ordered locus">TM1040_2087</name>
</gene>
<dbReference type="EMBL" id="CP000377">
    <property type="protein sequence ID" value="ABF64819.1"/>
    <property type="molecule type" value="Genomic_DNA"/>
</dbReference>
<dbReference type="RefSeq" id="WP_011539411.1">
    <property type="nucleotide sequence ID" value="NC_008044.1"/>
</dbReference>
<dbReference type="SMR" id="Q1GEU7"/>
<dbReference type="STRING" id="292414.TM1040_2087"/>
<dbReference type="KEGG" id="sit:TM1040_2087"/>
<dbReference type="eggNOG" id="COG0224">
    <property type="taxonomic scope" value="Bacteria"/>
</dbReference>
<dbReference type="HOGENOM" id="CLU_050669_0_1_5"/>
<dbReference type="OrthoDB" id="9812769at2"/>
<dbReference type="Proteomes" id="UP000000636">
    <property type="component" value="Chromosome"/>
</dbReference>
<dbReference type="GO" id="GO:0005886">
    <property type="term" value="C:plasma membrane"/>
    <property type="evidence" value="ECO:0007669"/>
    <property type="project" value="UniProtKB-SubCell"/>
</dbReference>
<dbReference type="GO" id="GO:0045259">
    <property type="term" value="C:proton-transporting ATP synthase complex"/>
    <property type="evidence" value="ECO:0007669"/>
    <property type="project" value="UniProtKB-KW"/>
</dbReference>
<dbReference type="GO" id="GO:0005524">
    <property type="term" value="F:ATP binding"/>
    <property type="evidence" value="ECO:0007669"/>
    <property type="project" value="UniProtKB-UniRule"/>
</dbReference>
<dbReference type="GO" id="GO:0046933">
    <property type="term" value="F:proton-transporting ATP synthase activity, rotational mechanism"/>
    <property type="evidence" value="ECO:0007669"/>
    <property type="project" value="UniProtKB-UniRule"/>
</dbReference>
<dbReference type="GO" id="GO:0042777">
    <property type="term" value="P:proton motive force-driven plasma membrane ATP synthesis"/>
    <property type="evidence" value="ECO:0007669"/>
    <property type="project" value="UniProtKB-UniRule"/>
</dbReference>
<dbReference type="CDD" id="cd12151">
    <property type="entry name" value="F1-ATPase_gamma"/>
    <property type="match status" value="1"/>
</dbReference>
<dbReference type="FunFam" id="1.10.287.80:FF:000001">
    <property type="entry name" value="ATP synthase gamma chain"/>
    <property type="match status" value="1"/>
</dbReference>
<dbReference type="FunFam" id="1.10.287.80:FF:000003">
    <property type="entry name" value="ATP synthase gamma chain, chloroplastic"/>
    <property type="match status" value="1"/>
</dbReference>
<dbReference type="Gene3D" id="3.40.1380.10">
    <property type="match status" value="1"/>
</dbReference>
<dbReference type="Gene3D" id="1.10.287.80">
    <property type="entry name" value="ATP synthase, gamma subunit, helix hairpin domain"/>
    <property type="match status" value="1"/>
</dbReference>
<dbReference type="HAMAP" id="MF_00815">
    <property type="entry name" value="ATP_synth_gamma_bact"/>
    <property type="match status" value="1"/>
</dbReference>
<dbReference type="InterPro" id="IPR035968">
    <property type="entry name" value="ATP_synth_F1_ATPase_gsu"/>
</dbReference>
<dbReference type="InterPro" id="IPR000131">
    <property type="entry name" value="ATP_synth_F1_gsu"/>
</dbReference>
<dbReference type="InterPro" id="IPR023632">
    <property type="entry name" value="ATP_synth_F1_gsu_CS"/>
</dbReference>
<dbReference type="NCBIfam" id="TIGR01146">
    <property type="entry name" value="ATPsyn_F1gamma"/>
    <property type="match status" value="1"/>
</dbReference>
<dbReference type="NCBIfam" id="NF004146">
    <property type="entry name" value="PRK05621.1-4"/>
    <property type="match status" value="1"/>
</dbReference>
<dbReference type="PANTHER" id="PTHR11693">
    <property type="entry name" value="ATP SYNTHASE GAMMA CHAIN"/>
    <property type="match status" value="1"/>
</dbReference>
<dbReference type="PANTHER" id="PTHR11693:SF22">
    <property type="entry name" value="ATP SYNTHASE SUBUNIT GAMMA, MITOCHONDRIAL"/>
    <property type="match status" value="1"/>
</dbReference>
<dbReference type="Pfam" id="PF00231">
    <property type="entry name" value="ATP-synt"/>
    <property type="match status" value="1"/>
</dbReference>
<dbReference type="PIRSF" id="PIRSF039089">
    <property type="entry name" value="ATP_synthase_gamma"/>
    <property type="match status" value="1"/>
</dbReference>
<dbReference type="PRINTS" id="PR00126">
    <property type="entry name" value="ATPASEGAMMA"/>
</dbReference>
<dbReference type="SUPFAM" id="SSF52943">
    <property type="entry name" value="ATP synthase (F1-ATPase), gamma subunit"/>
    <property type="match status" value="1"/>
</dbReference>
<dbReference type="PROSITE" id="PS00153">
    <property type="entry name" value="ATPASE_GAMMA"/>
    <property type="match status" value="1"/>
</dbReference>